<sequence>MSAVLKSPADSAIADISLADWGRKEIRIAETEMPGLMAIREEFAAKQPLKGARITGSLHMTIQTAVLIETLKALGADVRWASCNIFSTQDHAAAAIAATGTPVFAIKGETLVDYWDYTHRIFDFGPKGSEGEGPNMILDDGGDATLLMHLGKRAEKDASVLAHPGSEEERILFAAIKAKLAEDSTWYSRKSAQIIGVTEETTTGVHRLKEMSAKGTLLFRAINVNDSVTKSKFDNLYGCRESLVDGIKRATDVMIAGKVAVVAGYGDVGKGSAQALRALSAQVWVTEIDPINALQAAMEGFKVVTMEWAADKADIFVTTTGNRDVITFEHMKAMKDQAIVCNIGHFDNEIQVAKLEEHCQWEEIKPQVDHVIFPDGKRIILLAKGRLVNLGCGTGHPSFVMSNSFANQTIAQIELFTHPEGYDVGKVYVLPKHLDEKVARLHLKKVGAMLTELSDEQAAYIGVPKQGPYKPDTYRY</sequence>
<organism>
    <name type="scientific">Acidovorax sp. (strain JS42)</name>
    <dbReference type="NCBI Taxonomy" id="232721"/>
    <lineage>
        <taxon>Bacteria</taxon>
        <taxon>Pseudomonadati</taxon>
        <taxon>Pseudomonadota</taxon>
        <taxon>Betaproteobacteria</taxon>
        <taxon>Burkholderiales</taxon>
        <taxon>Comamonadaceae</taxon>
        <taxon>Acidovorax</taxon>
    </lineage>
</organism>
<dbReference type="EC" id="3.13.2.1" evidence="1"/>
<dbReference type="EMBL" id="CP000539">
    <property type="protein sequence ID" value="ABM40865.1"/>
    <property type="molecule type" value="Genomic_DNA"/>
</dbReference>
<dbReference type="SMR" id="A1W3P0"/>
<dbReference type="STRING" id="232721.Ajs_0618"/>
<dbReference type="KEGG" id="ajs:Ajs_0618"/>
<dbReference type="eggNOG" id="COG0499">
    <property type="taxonomic scope" value="Bacteria"/>
</dbReference>
<dbReference type="HOGENOM" id="CLU_025194_2_1_4"/>
<dbReference type="UniPathway" id="UPA00314">
    <property type="reaction ID" value="UER00076"/>
</dbReference>
<dbReference type="Proteomes" id="UP000000645">
    <property type="component" value="Chromosome"/>
</dbReference>
<dbReference type="GO" id="GO:0005829">
    <property type="term" value="C:cytosol"/>
    <property type="evidence" value="ECO:0007669"/>
    <property type="project" value="TreeGrafter"/>
</dbReference>
<dbReference type="GO" id="GO:0004013">
    <property type="term" value="F:adenosylhomocysteinase activity"/>
    <property type="evidence" value="ECO:0007669"/>
    <property type="project" value="UniProtKB-UniRule"/>
</dbReference>
<dbReference type="GO" id="GO:0071269">
    <property type="term" value="P:L-homocysteine biosynthetic process"/>
    <property type="evidence" value="ECO:0007669"/>
    <property type="project" value="UniProtKB-UniRule"/>
</dbReference>
<dbReference type="GO" id="GO:0006730">
    <property type="term" value="P:one-carbon metabolic process"/>
    <property type="evidence" value="ECO:0007669"/>
    <property type="project" value="UniProtKB-KW"/>
</dbReference>
<dbReference type="GO" id="GO:0033353">
    <property type="term" value="P:S-adenosylmethionine cycle"/>
    <property type="evidence" value="ECO:0007669"/>
    <property type="project" value="TreeGrafter"/>
</dbReference>
<dbReference type="CDD" id="cd00401">
    <property type="entry name" value="SAHH"/>
    <property type="match status" value="1"/>
</dbReference>
<dbReference type="FunFam" id="3.40.50.720:FF:000004">
    <property type="entry name" value="Adenosylhomocysteinase"/>
    <property type="match status" value="1"/>
</dbReference>
<dbReference type="Gene3D" id="3.40.50.1480">
    <property type="entry name" value="Adenosylhomocysteinase-like"/>
    <property type="match status" value="1"/>
</dbReference>
<dbReference type="Gene3D" id="3.40.50.720">
    <property type="entry name" value="NAD(P)-binding Rossmann-like Domain"/>
    <property type="match status" value="1"/>
</dbReference>
<dbReference type="HAMAP" id="MF_00563">
    <property type="entry name" value="AdoHcyase"/>
    <property type="match status" value="1"/>
</dbReference>
<dbReference type="InterPro" id="IPR042172">
    <property type="entry name" value="Adenosylhomocyst_ase-like_sf"/>
</dbReference>
<dbReference type="InterPro" id="IPR000043">
    <property type="entry name" value="Adenosylhomocysteinase-like"/>
</dbReference>
<dbReference type="InterPro" id="IPR015878">
    <property type="entry name" value="Ado_hCys_hydrolase_NAD-bd"/>
</dbReference>
<dbReference type="InterPro" id="IPR036291">
    <property type="entry name" value="NAD(P)-bd_dom_sf"/>
</dbReference>
<dbReference type="InterPro" id="IPR020082">
    <property type="entry name" value="S-Ado-L-homoCys_hydrolase_CS"/>
</dbReference>
<dbReference type="NCBIfam" id="TIGR00936">
    <property type="entry name" value="ahcY"/>
    <property type="match status" value="1"/>
</dbReference>
<dbReference type="NCBIfam" id="NF004005">
    <property type="entry name" value="PRK05476.2-3"/>
    <property type="match status" value="1"/>
</dbReference>
<dbReference type="PANTHER" id="PTHR23420">
    <property type="entry name" value="ADENOSYLHOMOCYSTEINASE"/>
    <property type="match status" value="1"/>
</dbReference>
<dbReference type="PANTHER" id="PTHR23420:SF0">
    <property type="entry name" value="ADENOSYLHOMOCYSTEINASE"/>
    <property type="match status" value="1"/>
</dbReference>
<dbReference type="Pfam" id="PF05221">
    <property type="entry name" value="AdoHcyase"/>
    <property type="match status" value="1"/>
</dbReference>
<dbReference type="Pfam" id="PF00670">
    <property type="entry name" value="AdoHcyase_NAD"/>
    <property type="match status" value="1"/>
</dbReference>
<dbReference type="PIRSF" id="PIRSF001109">
    <property type="entry name" value="Ad_hcy_hydrolase"/>
    <property type="match status" value="1"/>
</dbReference>
<dbReference type="SMART" id="SM00996">
    <property type="entry name" value="AdoHcyase"/>
    <property type="match status" value="1"/>
</dbReference>
<dbReference type="SMART" id="SM00997">
    <property type="entry name" value="AdoHcyase_NAD"/>
    <property type="match status" value="1"/>
</dbReference>
<dbReference type="SUPFAM" id="SSF52283">
    <property type="entry name" value="Formate/glycerate dehydrogenase catalytic domain-like"/>
    <property type="match status" value="1"/>
</dbReference>
<dbReference type="SUPFAM" id="SSF51735">
    <property type="entry name" value="NAD(P)-binding Rossmann-fold domains"/>
    <property type="match status" value="1"/>
</dbReference>
<dbReference type="PROSITE" id="PS00738">
    <property type="entry name" value="ADOHCYASE_1"/>
    <property type="match status" value="1"/>
</dbReference>
<dbReference type="PROSITE" id="PS00739">
    <property type="entry name" value="ADOHCYASE_2"/>
    <property type="match status" value="1"/>
</dbReference>
<accession>A1W3P0</accession>
<protein>
    <recommendedName>
        <fullName evidence="1">Adenosylhomocysteinase</fullName>
        <ecNumber evidence="1">3.13.2.1</ecNumber>
    </recommendedName>
    <alternativeName>
        <fullName evidence="1">S-adenosyl-L-homocysteine hydrolase</fullName>
        <shortName evidence="1">AdoHcyase</shortName>
    </alternativeName>
</protein>
<keyword id="KW-0963">Cytoplasm</keyword>
<keyword id="KW-0378">Hydrolase</keyword>
<keyword id="KW-0520">NAD</keyword>
<keyword id="KW-0554">One-carbon metabolism</keyword>
<proteinExistence type="inferred from homology"/>
<evidence type="ECO:0000255" key="1">
    <source>
        <dbReference type="HAMAP-Rule" id="MF_00563"/>
    </source>
</evidence>
<gene>
    <name evidence="1" type="primary">ahcY</name>
    <name type="ordered locus">Ajs_0618</name>
</gene>
<feature type="chain" id="PRO_1000212052" description="Adenosylhomocysteinase">
    <location>
        <begin position="1"/>
        <end position="476"/>
    </location>
</feature>
<feature type="binding site" evidence="1">
    <location>
        <position position="61"/>
    </location>
    <ligand>
        <name>substrate</name>
    </ligand>
</feature>
<feature type="binding site" evidence="1">
    <location>
        <position position="140"/>
    </location>
    <ligand>
        <name>substrate</name>
    </ligand>
</feature>
<feature type="binding site" evidence="1">
    <location>
        <position position="200"/>
    </location>
    <ligand>
        <name>substrate</name>
    </ligand>
</feature>
<feature type="binding site" evidence="1">
    <location>
        <begin position="201"/>
        <end position="203"/>
    </location>
    <ligand>
        <name>NAD(+)</name>
        <dbReference type="ChEBI" id="CHEBI:57540"/>
    </ligand>
</feature>
<feature type="binding site" evidence="1">
    <location>
        <position position="230"/>
    </location>
    <ligand>
        <name>substrate</name>
    </ligand>
</feature>
<feature type="binding site" evidence="1">
    <location>
        <position position="234"/>
    </location>
    <ligand>
        <name>substrate</name>
    </ligand>
</feature>
<feature type="binding site" evidence="1">
    <location>
        <position position="235"/>
    </location>
    <ligand>
        <name>NAD(+)</name>
        <dbReference type="ChEBI" id="CHEBI:57540"/>
    </ligand>
</feature>
<feature type="binding site" evidence="1">
    <location>
        <begin position="264"/>
        <end position="269"/>
    </location>
    <ligand>
        <name>NAD(+)</name>
        <dbReference type="ChEBI" id="CHEBI:57540"/>
    </ligand>
</feature>
<feature type="binding site" evidence="1">
    <location>
        <position position="287"/>
    </location>
    <ligand>
        <name>NAD(+)</name>
        <dbReference type="ChEBI" id="CHEBI:57540"/>
    </ligand>
</feature>
<feature type="binding site" evidence="1">
    <location>
        <position position="322"/>
    </location>
    <ligand>
        <name>NAD(+)</name>
        <dbReference type="ChEBI" id="CHEBI:57540"/>
    </ligand>
</feature>
<feature type="binding site" evidence="1">
    <location>
        <begin position="343"/>
        <end position="345"/>
    </location>
    <ligand>
        <name>NAD(+)</name>
        <dbReference type="ChEBI" id="CHEBI:57540"/>
    </ligand>
</feature>
<feature type="binding site" evidence="1">
    <location>
        <position position="389"/>
    </location>
    <ligand>
        <name>NAD(+)</name>
        <dbReference type="ChEBI" id="CHEBI:57540"/>
    </ligand>
</feature>
<name>SAHH_ACISJ</name>
<reference key="1">
    <citation type="submission" date="2006-12" db="EMBL/GenBank/DDBJ databases">
        <title>Complete sequence of chromosome 1 of Acidovorax sp. JS42.</title>
        <authorList>
            <person name="Copeland A."/>
            <person name="Lucas S."/>
            <person name="Lapidus A."/>
            <person name="Barry K."/>
            <person name="Detter J.C."/>
            <person name="Glavina del Rio T."/>
            <person name="Dalin E."/>
            <person name="Tice H."/>
            <person name="Pitluck S."/>
            <person name="Chertkov O."/>
            <person name="Brettin T."/>
            <person name="Bruce D."/>
            <person name="Han C."/>
            <person name="Tapia R."/>
            <person name="Gilna P."/>
            <person name="Schmutz J."/>
            <person name="Larimer F."/>
            <person name="Land M."/>
            <person name="Hauser L."/>
            <person name="Kyrpides N."/>
            <person name="Kim E."/>
            <person name="Stahl D."/>
            <person name="Richardson P."/>
        </authorList>
    </citation>
    <scope>NUCLEOTIDE SEQUENCE [LARGE SCALE GENOMIC DNA]</scope>
    <source>
        <strain>JS42</strain>
    </source>
</reference>
<comment type="function">
    <text evidence="1">May play a key role in the regulation of the intracellular concentration of adenosylhomocysteine.</text>
</comment>
<comment type="catalytic activity">
    <reaction evidence="1">
        <text>S-adenosyl-L-homocysteine + H2O = L-homocysteine + adenosine</text>
        <dbReference type="Rhea" id="RHEA:21708"/>
        <dbReference type="ChEBI" id="CHEBI:15377"/>
        <dbReference type="ChEBI" id="CHEBI:16335"/>
        <dbReference type="ChEBI" id="CHEBI:57856"/>
        <dbReference type="ChEBI" id="CHEBI:58199"/>
        <dbReference type="EC" id="3.13.2.1"/>
    </reaction>
</comment>
<comment type="cofactor">
    <cofactor evidence="1">
        <name>NAD(+)</name>
        <dbReference type="ChEBI" id="CHEBI:57540"/>
    </cofactor>
    <text evidence="1">Binds 1 NAD(+) per subunit.</text>
</comment>
<comment type="pathway">
    <text evidence="1">Amino-acid biosynthesis; L-homocysteine biosynthesis; L-homocysteine from S-adenosyl-L-homocysteine: step 1/1.</text>
</comment>
<comment type="subcellular location">
    <subcellularLocation>
        <location evidence="1">Cytoplasm</location>
    </subcellularLocation>
</comment>
<comment type="similarity">
    <text evidence="1">Belongs to the adenosylhomocysteinase family.</text>
</comment>